<keyword id="KW-0067">ATP-binding</keyword>
<keyword id="KW-0133">Cell shape</keyword>
<keyword id="KW-0963">Cytoplasm</keyword>
<keyword id="KW-0903">Direct protein sequencing</keyword>
<keyword id="KW-0547">Nucleotide-binding</keyword>
<keyword id="KW-1185">Reference proteome</keyword>
<dbReference type="EMBL" id="M22055">
    <property type="protein sequence ID" value="AAA83891.1"/>
    <property type="molecule type" value="Genomic_DNA"/>
</dbReference>
<dbReference type="EMBL" id="U18997">
    <property type="protein sequence ID" value="AAA58054.1"/>
    <property type="status" value="ALT_INIT"/>
    <property type="molecule type" value="Genomic_DNA"/>
</dbReference>
<dbReference type="EMBL" id="U00096">
    <property type="protein sequence ID" value="AAC76283.2"/>
    <property type="molecule type" value="Genomic_DNA"/>
</dbReference>
<dbReference type="EMBL" id="AP009048">
    <property type="protein sequence ID" value="BAE77293.1"/>
    <property type="molecule type" value="Genomic_DNA"/>
</dbReference>
<dbReference type="EMBL" id="M31792">
    <property type="protein sequence ID" value="AAA24154.1"/>
    <property type="molecule type" value="Genomic_DNA"/>
</dbReference>
<dbReference type="RefSeq" id="NP_417717.2">
    <property type="nucleotide sequence ID" value="NC_000913.3"/>
</dbReference>
<dbReference type="RefSeq" id="WP_000913396.1">
    <property type="nucleotide sequence ID" value="NZ_STEB01000012.1"/>
</dbReference>
<dbReference type="SMR" id="P0A9X4"/>
<dbReference type="BioGRID" id="4261940">
    <property type="interactions" value="393"/>
</dbReference>
<dbReference type="ComplexPortal" id="CPX-5718">
    <property type="entry name" value="Elongasome complex"/>
</dbReference>
<dbReference type="DIP" id="DIP-31874N"/>
<dbReference type="FunCoup" id="P0A9X4">
    <property type="interactions" value="619"/>
</dbReference>
<dbReference type="IntAct" id="P0A9X4">
    <property type="interactions" value="82"/>
</dbReference>
<dbReference type="MINT" id="P0A9X4"/>
<dbReference type="STRING" id="511145.b3251"/>
<dbReference type="TCDB" id="9.B.157.1.3">
    <property type="family name" value="the cell shape-determining mrebcd (mrebcd) family"/>
</dbReference>
<dbReference type="jPOST" id="P0A9X4"/>
<dbReference type="PaxDb" id="511145-b3251"/>
<dbReference type="EnsemblBacteria" id="AAC76283">
    <property type="protein sequence ID" value="AAC76283"/>
    <property type="gene ID" value="b3251"/>
</dbReference>
<dbReference type="GeneID" id="948588"/>
<dbReference type="GeneID" id="98390376"/>
<dbReference type="KEGG" id="ecj:JW3220"/>
<dbReference type="KEGG" id="eco:b3251"/>
<dbReference type="KEGG" id="ecoc:C3026_17675"/>
<dbReference type="PATRIC" id="fig|511145.12.peg.3348"/>
<dbReference type="EchoBASE" id="EB0603"/>
<dbReference type="eggNOG" id="COG1077">
    <property type="taxonomic scope" value="Bacteria"/>
</dbReference>
<dbReference type="HOGENOM" id="CLU_052037_0_0_6"/>
<dbReference type="InParanoid" id="P0A9X4"/>
<dbReference type="OMA" id="HEPTGNM"/>
<dbReference type="OrthoDB" id="9768127at2"/>
<dbReference type="PhylomeDB" id="P0A9X4"/>
<dbReference type="BioCyc" id="EcoCyc:EG10608-MONOMER"/>
<dbReference type="PRO" id="PR:P0A9X4"/>
<dbReference type="Proteomes" id="UP000000625">
    <property type="component" value="Chromosome"/>
</dbReference>
<dbReference type="GO" id="GO:0005737">
    <property type="term" value="C:cytoplasm"/>
    <property type="evidence" value="ECO:0007669"/>
    <property type="project" value="UniProtKB-SubCell"/>
</dbReference>
<dbReference type="GO" id="GO:0005856">
    <property type="term" value="C:cytoskeleton"/>
    <property type="evidence" value="ECO:0000314"/>
    <property type="project" value="EcoCyc"/>
</dbReference>
<dbReference type="GO" id="GO:0005886">
    <property type="term" value="C:plasma membrane"/>
    <property type="evidence" value="ECO:0000314"/>
    <property type="project" value="EcoCyc"/>
</dbReference>
<dbReference type="GO" id="GO:0099513">
    <property type="term" value="C:polymeric cytoskeletal fiber"/>
    <property type="evidence" value="ECO:0000314"/>
    <property type="project" value="EcoCyc"/>
</dbReference>
<dbReference type="GO" id="GO:0005524">
    <property type="term" value="F:ATP binding"/>
    <property type="evidence" value="ECO:0007669"/>
    <property type="project" value="UniProtKB-KW"/>
</dbReference>
<dbReference type="GO" id="GO:0042802">
    <property type="term" value="F:identical protein binding"/>
    <property type="evidence" value="ECO:0000314"/>
    <property type="project" value="EcoCyc"/>
</dbReference>
<dbReference type="GO" id="GO:0000902">
    <property type="term" value="P:cell morphogenesis"/>
    <property type="evidence" value="ECO:0007669"/>
    <property type="project" value="InterPro"/>
</dbReference>
<dbReference type="GO" id="GO:0043093">
    <property type="term" value="P:FtsZ-dependent cytokinesis"/>
    <property type="evidence" value="ECO:0000314"/>
    <property type="project" value="EcoCyc"/>
</dbReference>
<dbReference type="GO" id="GO:0051782">
    <property type="term" value="P:negative regulation of cell division"/>
    <property type="evidence" value="ECO:0000315"/>
    <property type="project" value="CACAO"/>
</dbReference>
<dbReference type="GO" id="GO:0009252">
    <property type="term" value="P:peptidoglycan biosynthetic process"/>
    <property type="evidence" value="ECO:0000303"/>
    <property type="project" value="ComplexPortal"/>
</dbReference>
<dbReference type="GO" id="GO:0008360">
    <property type="term" value="P:regulation of cell shape"/>
    <property type="evidence" value="ECO:0000315"/>
    <property type="project" value="EcoCyc"/>
</dbReference>
<dbReference type="GO" id="GO:0051983">
    <property type="term" value="P:regulation of chromosome segregation"/>
    <property type="evidence" value="ECO:0000315"/>
    <property type="project" value="EcoliWiki"/>
</dbReference>
<dbReference type="CDD" id="cd10225">
    <property type="entry name" value="ASKHA_NBD_MreB-like"/>
    <property type="match status" value="1"/>
</dbReference>
<dbReference type="FunFam" id="3.30.420.40:FF:000014">
    <property type="entry name" value="Rod shape-determining protein MreB"/>
    <property type="match status" value="1"/>
</dbReference>
<dbReference type="FunFam" id="3.30.420.40:FF:000019">
    <property type="entry name" value="Rod shape-determining protein MreB"/>
    <property type="match status" value="1"/>
</dbReference>
<dbReference type="FunFam" id="3.30.420.40:FF:000016">
    <property type="entry name" value="Rod shape-determining protein mreB"/>
    <property type="match status" value="1"/>
</dbReference>
<dbReference type="Gene3D" id="3.30.420.40">
    <property type="match status" value="3"/>
</dbReference>
<dbReference type="HAMAP" id="MF_02207">
    <property type="entry name" value="MreB"/>
    <property type="match status" value="1"/>
</dbReference>
<dbReference type="InterPro" id="IPR043129">
    <property type="entry name" value="ATPase_NBD"/>
</dbReference>
<dbReference type="InterPro" id="IPR004753">
    <property type="entry name" value="MreB"/>
</dbReference>
<dbReference type="InterPro" id="IPR056546">
    <property type="entry name" value="MreB_MamK-like"/>
</dbReference>
<dbReference type="NCBIfam" id="TIGR00904">
    <property type="entry name" value="mreB"/>
    <property type="match status" value="1"/>
</dbReference>
<dbReference type="NCBIfam" id="NF010539">
    <property type="entry name" value="PRK13927.1"/>
    <property type="match status" value="1"/>
</dbReference>
<dbReference type="PANTHER" id="PTHR42749">
    <property type="entry name" value="CELL SHAPE-DETERMINING PROTEIN MREB"/>
    <property type="match status" value="1"/>
</dbReference>
<dbReference type="PANTHER" id="PTHR42749:SF1">
    <property type="entry name" value="CELL SHAPE-DETERMINING PROTEIN MREB"/>
    <property type="match status" value="1"/>
</dbReference>
<dbReference type="Pfam" id="PF06723">
    <property type="entry name" value="MreB_Mbl"/>
    <property type="match status" value="1"/>
</dbReference>
<dbReference type="PRINTS" id="PR01652">
    <property type="entry name" value="SHAPEPROTEIN"/>
</dbReference>
<dbReference type="SUPFAM" id="SSF53067">
    <property type="entry name" value="Actin-like ATPase domain"/>
    <property type="match status" value="2"/>
</dbReference>
<evidence type="ECO:0000255" key="1">
    <source>
        <dbReference type="HAMAP-Rule" id="MF_02207"/>
    </source>
</evidence>
<evidence type="ECO:0000269" key="2">
    <source>
    </source>
</evidence>
<evidence type="ECO:0000269" key="3">
    <source>
    </source>
</evidence>
<evidence type="ECO:0000269" key="4">
    <source>
    </source>
</evidence>
<evidence type="ECO:0000269" key="5">
    <source>
    </source>
</evidence>
<evidence type="ECO:0000269" key="6">
    <source>
    </source>
</evidence>
<evidence type="ECO:0000269" key="7">
    <source>
    </source>
</evidence>
<evidence type="ECO:0000269" key="8">
    <source>
    </source>
</evidence>
<evidence type="ECO:0000303" key="9">
    <source>
    </source>
</evidence>
<evidence type="ECO:0000305" key="10"/>
<proteinExistence type="evidence at protein level"/>
<comment type="function">
    <text evidence="2 4 8">Forms membrane-associated dynamic filaments that are essential for cell shape determination (PubMed:15612918, PubMed:21903929). Acts by regulating cell wall synthesis and cell elongation, and thus cell shape (PubMed:21903929). A feedback loop between cell geometry and MreB localization maintains elongated cell shape by targeting cell wall growth to regions of negative cell wall curvature (PubMed:24550515). Filaments rotate around the cell circumference in concert with the cell wall synthesis enzymes. The process is driven by the cell wall synthesis machinery and does not depend on MreB polymerization (PubMed:21903929). Rotation may contribute to the robust maintenance of rod shape (PubMed:21903929).</text>
</comment>
<comment type="activity regulation">
    <text evidence="3 5 6 7">Requires ATP hydrolysis for polymerization (PubMed:23235161). Polymerization is inhibited by toxins CbtA and CptA, as well as by A22 ([S-(3,4-dichlorobenzyl)isothiourea)] all of which cause cell rounding and eventual death. Inhibition by toxin CbtA is neutralized by cytoskeleton bundling-enhancing protein CbeA, inhibition by toxin CptA is neutralized by antitoxin CptB, while inhibition by A22 can be neutralized by overexpression of CbeA (PubMed:21166897, PubMed:22239607, PubMed:22515815).</text>
</comment>
<comment type="subunit">
    <text evidence="2 3 5 6 7">Forms polymers in the presence of ATP or GTP (PubMed:23235161). Forms an essential membrane-bound complex with MreC and MreD. Interacts directly with MreC but not with MreD (PubMed:15612918). Interacts with FtsZ, toxins CbtA and CptA, and cytoskeleton bundling-enhancing protein CbeA (PubMed:21166897, PubMed:22239607, PubMed:22515815).</text>
</comment>
<comment type="interaction">
    <interactant intactId="EBI-371008">
        <id>P0A9X4</id>
    </interactant>
    <interactant intactId="EBI-1126877">
        <id>P76364</id>
        <label>cbeA</label>
    </interactant>
    <organismsDiffer>false</organismsDiffer>
    <experiments>2</experiments>
</comment>
<comment type="interaction">
    <interactant intactId="EBI-371008">
        <id>P0A9X4</id>
    </interactant>
    <interactant intactId="EBI-550562">
        <id>P0ABH0</id>
        <label>ftsA</label>
    </interactant>
    <organismsDiffer>false</organismsDiffer>
    <experiments>3</experiments>
</comment>
<comment type="interaction">
    <interactant intactId="EBI-371008">
        <id>P0A9X4</id>
    </interactant>
    <interactant intactId="EBI-370963">
        <id>P0A9A6</id>
        <label>ftsZ</label>
    </interactant>
    <organismsDiffer>false</organismsDiffer>
    <experiments>7</experiments>
</comment>
<comment type="interaction">
    <interactant intactId="EBI-371008">
        <id>P0A9X4</id>
    </interactant>
    <interactant intactId="EBI-371008">
        <id>P0A9X4</id>
        <label>mreB</label>
    </interactant>
    <organismsDiffer>false</organismsDiffer>
    <experiments>3</experiments>
</comment>
<comment type="interaction">
    <interactant intactId="EBI-371008">
        <id>P0A9X4</id>
    </interactant>
    <interactant intactId="EBI-1129185">
        <id>P27434</id>
        <label>rodZ</label>
    </interactant>
    <organismsDiffer>false</organismsDiffer>
    <experiments>3</experiments>
</comment>
<comment type="subcellular location">
    <subcellularLocation>
        <location evidence="2">Cytoplasm</location>
    </subcellularLocation>
    <text evidence="2 8">Membrane-associated (PubMed:15612918). Preferentially localizes to regions of negative curvature (PubMed:24550515). May associate with the membrane via MreC (PubMed:15612918). Localization depends on MreC, MreD and RodA (PubMed:15612918).</text>
</comment>
<comment type="disruption phenotype">
    <text evidence="2">Depletion results in enlarged, spherical cells.</text>
</comment>
<comment type="similarity">
    <text evidence="1 10">Belongs to the FtsA/MreB family.</text>
</comment>
<comment type="sequence caution" evidence="10">
    <conflict type="erroneous initiation">
        <sequence resource="EMBL-CDS" id="AAA58054"/>
    </conflict>
    <text>Extended N-terminus.</text>
</comment>
<feature type="chain" id="PRO_0000062759" description="Cell shape-determining protein MreB">
    <location>
        <begin position="1"/>
        <end position="347"/>
    </location>
</feature>
<feature type="binding site" evidence="1">
    <location>
        <begin position="19"/>
        <end position="21"/>
    </location>
    <ligand>
        <name>ATP</name>
        <dbReference type="ChEBI" id="CHEBI:30616"/>
    </ligand>
</feature>
<feature type="binding site" evidence="1">
    <location>
        <begin position="168"/>
        <end position="170"/>
    </location>
    <ligand>
        <name>ATP</name>
        <dbReference type="ChEBI" id="CHEBI:30616"/>
    </ligand>
</feature>
<feature type="binding site" evidence="1">
    <location>
        <begin position="216"/>
        <end position="219"/>
    </location>
    <ligand>
        <name>ATP</name>
        <dbReference type="ChEBI" id="CHEBI:30616"/>
    </ligand>
</feature>
<feature type="binding site" evidence="1">
    <location>
        <begin position="296"/>
        <end position="299"/>
    </location>
    <ligand>
        <name>ATP</name>
        <dbReference type="ChEBI" id="CHEBI:30616"/>
    </ligand>
</feature>
<feature type="sequence conflict" description="In Ref. 1; AAA83891." evidence="10" ref="1">
    <original>KQ</original>
    <variation>NE</variation>
    <location>
        <begin position="60"/>
        <end position="61"/>
    </location>
</feature>
<feature type="sequence conflict" description="In Ref. 1; AAA83891." evidence="10" ref="1">
    <original>T</original>
    <variation>I</variation>
    <location>
        <position position="265"/>
    </location>
</feature>
<feature type="sequence conflict" description="In Ref. 1; AAA83891." evidence="10" ref="1">
    <original>QC</original>
    <variation>HT</variation>
    <location>
        <begin position="277"/>
        <end position="278"/>
    </location>
</feature>
<organism>
    <name type="scientific">Escherichia coli (strain K12)</name>
    <dbReference type="NCBI Taxonomy" id="83333"/>
    <lineage>
        <taxon>Bacteria</taxon>
        <taxon>Pseudomonadati</taxon>
        <taxon>Pseudomonadota</taxon>
        <taxon>Gammaproteobacteria</taxon>
        <taxon>Enterobacterales</taxon>
        <taxon>Enterobacteriaceae</taxon>
        <taxon>Escherichia</taxon>
    </lineage>
</organism>
<gene>
    <name evidence="9" type="primary">mreB</name>
    <name type="synonym">envB</name>
    <name type="synonym">rodY</name>
    <name type="ordered locus">b3251</name>
    <name type="ordered locus">JW3220</name>
</gene>
<protein>
    <recommendedName>
        <fullName evidence="1 10">Cell shape-determining protein MreB</fullName>
    </recommendedName>
    <alternativeName>
        <fullName evidence="10">Actin-like MreB protein</fullName>
    </alternativeName>
    <alternativeName>
        <fullName evidence="10">Rod shape-determining protein MreB</fullName>
    </alternativeName>
</protein>
<name>MREB_ECOLI</name>
<accession>P0A9X4</accession>
<accession>P13519</accession>
<accession>P76678</accession>
<accession>Q2M8W3</accession>
<reference key="1">
    <citation type="journal article" date="1988" name="J. Bacteriol.">
        <title>Determinations of the DNA sequence of the mreB gene and of the gene products of the mre region that function in formation of the rod shape of Escherichia coli cells.</title>
        <authorList>
            <person name="Doi M."/>
            <person name="Wachi M."/>
            <person name="Ishino F."/>
            <person name="Tomioka S."/>
            <person name="Ito M."/>
            <person name="Sakagami Y."/>
            <person name="Suzuki A."/>
            <person name="Matsuhashi M."/>
        </authorList>
    </citation>
    <scope>NUCLEOTIDE SEQUENCE [GENOMIC DNA]</scope>
    <scope>PROTEIN SEQUENCE OF 1-12</scope>
    <source>
        <strain>K12</strain>
    </source>
</reference>
<reference key="2">
    <citation type="journal article" date="1997" name="Science">
        <title>The complete genome sequence of Escherichia coli K-12.</title>
        <authorList>
            <person name="Blattner F.R."/>
            <person name="Plunkett G. III"/>
            <person name="Bloch C.A."/>
            <person name="Perna N.T."/>
            <person name="Burland V."/>
            <person name="Riley M."/>
            <person name="Collado-Vides J."/>
            <person name="Glasner J.D."/>
            <person name="Rode C.K."/>
            <person name="Mayhew G.F."/>
            <person name="Gregor J."/>
            <person name="Davis N.W."/>
            <person name="Kirkpatrick H.A."/>
            <person name="Goeden M.A."/>
            <person name="Rose D.J."/>
            <person name="Mau B."/>
            <person name="Shao Y."/>
        </authorList>
    </citation>
    <scope>NUCLEOTIDE SEQUENCE [LARGE SCALE GENOMIC DNA]</scope>
    <source>
        <strain>K12 / MG1655 / ATCC 47076</strain>
    </source>
</reference>
<reference key="3">
    <citation type="journal article" date="2006" name="Mol. Syst. Biol.">
        <title>Highly accurate genome sequences of Escherichia coli K-12 strains MG1655 and W3110.</title>
        <authorList>
            <person name="Hayashi K."/>
            <person name="Morooka N."/>
            <person name="Yamamoto Y."/>
            <person name="Fujita K."/>
            <person name="Isono K."/>
            <person name="Choi S."/>
            <person name="Ohtsubo E."/>
            <person name="Baba T."/>
            <person name="Wanner B.L."/>
            <person name="Mori H."/>
            <person name="Horiuchi T."/>
        </authorList>
    </citation>
    <scope>NUCLEOTIDE SEQUENCE [LARGE SCALE GENOMIC DNA]</scope>
    <source>
        <strain>K12 / W3110 / ATCC 27325 / DSM 5911</strain>
    </source>
</reference>
<reference key="4">
    <citation type="journal article" date="1989" name="J. Bacteriol.">
        <title>New mre genes mreC and mreD, responsible for formation of the rod shape of Escherichia coli cells.</title>
        <authorList>
            <person name="Wachi M."/>
            <person name="Doi M."/>
            <person name="Okada Y."/>
            <person name="Matsuhashi M."/>
        </authorList>
    </citation>
    <scope>NUCLEOTIDE SEQUENCE [GENOMIC DNA] OF 338-347</scope>
    <source>
        <strain>K12</strain>
    </source>
</reference>
<reference key="5">
    <citation type="journal article" date="1997" name="Electrophoresis">
        <title>Comparing the predicted and observed properties of proteins encoded in the genome of Escherichia coli K-12.</title>
        <authorList>
            <person name="Link A.J."/>
            <person name="Robison K."/>
            <person name="Church G.M."/>
        </authorList>
    </citation>
    <scope>PROTEIN SEQUENCE OF 1-12</scope>
    <source>
        <strain>K12 / EMG2</strain>
    </source>
</reference>
<reference key="6">
    <citation type="journal article" date="2005" name="Mol. Microbiol.">
        <title>The morphogenetic MreBCD proteins of Escherichia coli form an essential membrane-bound complex.</title>
        <authorList>
            <person name="Kruse T."/>
            <person name="Bork-Jensen J."/>
            <person name="Gerdes K."/>
        </authorList>
    </citation>
    <scope>FUNCTION</scope>
    <scope>SUBUNIT</scope>
    <scope>SUBCELLULAR LOCATION</scope>
    <scope>DISRUPTION PHENOTYPE</scope>
</reference>
<reference key="7">
    <citation type="journal article" date="2011" name="Mol. Microbiol.">
        <title>YeeV is an Escherichia coli toxin that inhibits cell division by targeting the cytoskeleton proteins, FtsZ and MreB.</title>
        <authorList>
            <person name="Tan Q."/>
            <person name="Awano N."/>
            <person name="Inouye M."/>
        </authorList>
    </citation>
    <scope>ACTIVITY REGULATION</scope>
    <scope>INTERACTION WITH FTSZ AND CBTA</scope>
    <source>
        <strain>K12 / BW25113</strain>
    </source>
</reference>
<reference key="8">
    <citation type="journal article" date="2011" name="Proc. Natl. Acad. Sci. U.S.A.">
        <title>The bacterial actin MreB rotates, and rotation depends on cell-wall assembly.</title>
        <authorList>
            <person name="van Teeffelen S."/>
            <person name="Wang S."/>
            <person name="Furchtgott L."/>
            <person name="Huang K.C."/>
            <person name="Wingreen N.S."/>
            <person name="Shaevitz J.W."/>
            <person name="Gitai Z."/>
        </authorList>
    </citation>
    <scope>FUNCTION</scope>
</reference>
<reference key="9">
    <citation type="journal article" date="2012" name="FEMS Microbiol. Lett.">
        <title>A novel membrane-bound toxin for cell division, CptA (YgfX), inhibits polymerization of cytoskeleton proteins, FtsZ and MreB, in Escherichia coli.</title>
        <authorList>
            <person name="Masuda H."/>
            <person name="Tan Q."/>
            <person name="Awano N."/>
            <person name="Yamaguchi Y."/>
            <person name="Inouye M."/>
        </authorList>
    </citation>
    <scope>ACTIVITY REGULATION</scope>
    <scope>INTERACTION WITH CPTA</scope>
    <source>
        <strain>B / BL21-DE3</strain>
        <strain>K12 / BW25113</strain>
    </source>
</reference>
<reference key="10">
    <citation type="journal article" date="2012" name="Mol. Microbiol.">
        <title>YeeU enhances the bundling of cytoskeletal polymers of MreB and FtsZ, antagonizing the CbtA (YeeV) toxicity in Escherichia coli.</title>
        <authorList>
            <person name="Masuda H."/>
            <person name="Tan Q."/>
            <person name="Awano N."/>
            <person name="Wu K.P."/>
            <person name="Inouye M."/>
        </authorList>
    </citation>
    <scope>ACTIVITY REGULATION</scope>
    <scope>INTERACTION WITH CBEA</scope>
    <source>
        <strain>K12 / BW25113</strain>
    </source>
</reference>
<reference key="11">
    <citation type="journal article" date="2013" name="J. Biol. Chem.">
        <title>Purification and characterization of Escherichia coli MreB protein.</title>
        <authorList>
            <person name="Nurse P."/>
            <person name="Marians K.J."/>
        </authorList>
    </citation>
    <scope>ACTIVITY REGULATION</scope>
    <scope>SUBUNIT</scope>
</reference>
<reference key="12">
    <citation type="journal article" date="2014" name="Proc. Natl. Acad. Sci. U.S.A.">
        <title>Rod-like bacterial shape is maintained by feedback between cell curvature and cytoskeletal localization.</title>
        <authorList>
            <person name="Ursell T.S."/>
            <person name="Nguyen J."/>
            <person name="Monds R.D."/>
            <person name="Colavin A."/>
            <person name="Billings G."/>
            <person name="Ouzounov N."/>
            <person name="Gitai Z."/>
            <person name="Shaevitz J.W."/>
            <person name="Huang K.C."/>
        </authorList>
    </citation>
    <scope>FUNCTION</scope>
    <scope>SUBCELLULAR LOCATION</scope>
</reference>
<sequence length="347" mass="36952">MLKKFRGMFSNDLSIDLGTANTLIYVKGQGIVLNEPSVVAIRQDRAGSPKSVAAVGHDAKQMLGRTPGNIAAIRPMKDGVIADFFVTEKMLQHFIKQVHSNSFMRPSPRVLVCVPVGATQVERRAIRESAQGAGAREVFLIEEPMAAAIGAGLPVSEATGSMVVDIGGGTTEVAVISLNGVVYSSSVRIGGDRFDEAIINYVRRNYGSLIGEATAERIKHEIGSAYPGDEVREIEVRGRNLAEGVPRGFTLNSNEILEALQEPLTGIVSAVMVALEQCPPELASDISERGMVLTGGGALLRNLDRLLMEETGIPVVVAEDPLTCVARGGGKALEMIDMHGGDLFSEE</sequence>